<keyword id="KW-0027">Amidation</keyword>
<keyword id="KW-0903">Direct protein sequencing</keyword>
<keyword id="KW-0527">Neuropeptide</keyword>
<keyword id="KW-0964">Secreted</keyword>
<reference evidence="5" key="1">
    <citation type="journal article" date="2012" name="Syst. Biol.">
        <title>Peptidomics-based phylogeny and biogeography of Mantophasmatodea (Hexapoda).</title>
        <authorList>
            <person name="Predel R."/>
            <person name="Neupert S."/>
            <person name="Huetteroth W."/>
            <person name="Kahnt J."/>
            <person name="Waidelich D."/>
            <person name="Roth S."/>
        </authorList>
    </citation>
    <scope>PROTEIN SEQUENCE</scope>
    <scope>AMIDATION AT LEU-9</scope>
    <source>
        <tissue evidence="3">Thoracic perisympathetic organs</tissue>
    </source>
</reference>
<feature type="peptide" id="PRO_0000421532" description="Extended FMRFamide-8" evidence="3">
    <location>
        <begin position="1"/>
        <end position="9"/>
    </location>
</feature>
<feature type="modified residue" description="Leucine amide" evidence="3">
    <location>
        <position position="9"/>
    </location>
</feature>
<feature type="unsure residue" description="L or I" evidence="3">
    <location>
        <position position="9"/>
    </location>
</feature>
<evidence type="ECO:0000250" key="1">
    <source>
        <dbReference type="UniProtKB" id="P34405"/>
    </source>
</evidence>
<evidence type="ECO:0000255" key="2"/>
<evidence type="ECO:0000269" key="3">
    <source>
    </source>
</evidence>
<evidence type="ECO:0000303" key="4">
    <source>
    </source>
</evidence>
<evidence type="ECO:0000305" key="5"/>
<evidence type="ECO:0000305" key="6">
    <source>
    </source>
</evidence>
<accession>B3A068</accession>
<comment type="function">
    <text evidence="1">FMRFamides and FMRFamide-like peptides are neuropeptides.</text>
</comment>
<comment type="subcellular location">
    <subcellularLocation>
        <location evidence="6">Secreted</location>
    </subcellularLocation>
</comment>
<comment type="similarity">
    <text evidence="2">Belongs to the FARP (FMRF amide related peptide) family.</text>
</comment>
<organism>
    <name type="scientific">Karoophasma biedouwense</name>
    <name type="common">Gladiator</name>
    <name type="synonym">Heel-walker</name>
    <dbReference type="NCBI Taxonomy" id="253133"/>
    <lineage>
        <taxon>Eukaryota</taxon>
        <taxon>Metazoa</taxon>
        <taxon>Ecdysozoa</taxon>
        <taxon>Arthropoda</taxon>
        <taxon>Hexapoda</taxon>
        <taxon>Insecta</taxon>
        <taxon>Pterygota</taxon>
        <taxon>Neoptera</taxon>
        <taxon>Polyneoptera</taxon>
        <taxon>Mantophasmatodea</taxon>
        <taxon>Austrophasmatidae</taxon>
        <taxon>Karoophasma</taxon>
    </lineage>
</organism>
<name>FAR8_KARBI</name>
<protein>
    <recommendedName>
        <fullName evidence="4">Extended FMRFamide-8</fullName>
        <shortName evidence="4">FMRFa-8</shortName>
    </recommendedName>
</protein>
<dbReference type="GO" id="GO:0005576">
    <property type="term" value="C:extracellular region"/>
    <property type="evidence" value="ECO:0007669"/>
    <property type="project" value="UniProtKB-SubCell"/>
</dbReference>
<dbReference type="GO" id="GO:0007218">
    <property type="term" value="P:neuropeptide signaling pathway"/>
    <property type="evidence" value="ECO:0007669"/>
    <property type="project" value="UniProtKB-KW"/>
</dbReference>
<proteinExistence type="evidence at protein level"/>
<sequence length="9" mass="1091">ARTDNFVRL</sequence>